<evidence type="ECO:0000255" key="1">
    <source>
        <dbReference type="HAMAP-Rule" id="MF_01390"/>
    </source>
</evidence>
<accession>Q70D37</accession>
<proteinExistence type="inferred from homology"/>
<keyword id="KW-0150">Chloroplast</keyword>
<keyword id="KW-0507">mRNA processing</keyword>
<keyword id="KW-0934">Plastid</keyword>
<keyword id="KW-0694">RNA-binding</keyword>
<keyword id="KW-0819">tRNA processing</keyword>
<reference key="1">
    <citation type="journal article" date="2004" name="Mol. Phylogenet. Evol.">
        <title>Phylogenetic relationships in Nicotiana (Solanaceae) inferred from multiple plastid regions.</title>
        <authorList>
            <person name="Clarkson J.J."/>
            <person name="Knapp S."/>
            <person name="Garcia V.F."/>
            <person name="Olmstead R.G."/>
            <person name="Leitch A.R."/>
            <person name="Chase M.W."/>
        </authorList>
    </citation>
    <scope>NUCLEOTIDE SEQUENCE [GENOMIC DNA]</scope>
</reference>
<comment type="function">
    <text evidence="1">Usually encoded in the trnK tRNA gene intron. Probably assists in splicing its own and other chloroplast group II introns.</text>
</comment>
<comment type="subcellular location">
    <subcellularLocation>
        <location>Plastid</location>
        <location>Chloroplast</location>
    </subcellularLocation>
</comment>
<comment type="similarity">
    <text evidence="1">Belongs to the intron maturase 2 family. MatK subfamily.</text>
</comment>
<feature type="chain" id="PRO_0000143539" description="Maturase K">
    <location>
        <begin position="1"/>
        <end position="509"/>
    </location>
</feature>
<protein>
    <recommendedName>
        <fullName evidence="1">Maturase K</fullName>
    </recommendedName>
    <alternativeName>
        <fullName evidence="1">Intron maturase</fullName>
    </alternativeName>
</protein>
<organism>
    <name type="scientific">Nicotiana clevelandii</name>
    <name type="common">Wild tobacco</name>
    <dbReference type="NCBI Taxonomy" id="81866"/>
    <lineage>
        <taxon>Eukaryota</taxon>
        <taxon>Viridiplantae</taxon>
        <taxon>Streptophyta</taxon>
        <taxon>Embryophyta</taxon>
        <taxon>Tracheophyta</taxon>
        <taxon>Spermatophyta</taxon>
        <taxon>Magnoliopsida</taxon>
        <taxon>eudicotyledons</taxon>
        <taxon>Gunneridae</taxon>
        <taxon>Pentapetalae</taxon>
        <taxon>asterids</taxon>
        <taxon>lamiids</taxon>
        <taxon>Solanales</taxon>
        <taxon>Solanaceae</taxon>
        <taxon>Nicotianoideae</taxon>
        <taxon>Nicotianeae</taxon>
        <taxon>Nicotiana</taxon>
    </lineage>
</organism>
<sequence>MEEIQRYLQLDRSQQHNFLYPLIFQEYIYALAHDPGLNRNRSILLENPGYNNKFSFLIVKRLITRMYQQNHFLISTNDLNKNEFLGCNKSLYSQMISEGFAFIVEIPFSLRLISSLSSFEGKKIFKSHNLRSIHSTFPFLEDNFAHLNYVLDILIPYPVHLEILVQTLRYWVKDASSLHLLRFFLHEYWNLNSLITSKKPGYSFSKKNQRFFFFLYNSYVYECESTFVFLRNQSSHLRSTSFGALLERIFFYGKIERLVEVFAKDFQVTLWLFKDPFMHYVRYQGKSILASKGTFLLINKWKFYLVNFWQCHFSLCFHTGRIHINQLSNHSRDFMGYLSSVRLNPSMVRSQMLENSFLINNAIKKFDTLVPIIPLIGSLAKANFCTVLGHPISKPVWSDLSDSDIIARFVRICRNLFHYYSGSSKKKTLYRIKYILRLSCARTLARKHKSTVRTFLKRSGSELLEEFLTSEEQVLSLTFPRASSSLGGVYRSRIWYLDIFCINDLANYQ</sequence>
<gene>
    <name evidence="1" type="primary">matK</name>
</gene>
<dbReference type="EMBL" id="AJ585850">
    <property type="protein sequence ID" value="CAE51491.1"/>
    <property type="molecule type" value="Genomic_DNA"/>
</dbReference>
<dbReference type="GO" id="GO:0009507">
    <property type="term" value="C:chloroplast"/>
    <property type="evidence" value="ECO:0007669"/>
    <property type="project" value="UniProtKB-SubCell"/>
</dbReference>
<dbReference type="GO" id="GO:0003723">
    <property type="term" value="F:RNA binding"/>
    <property type="evidence" value="ECO:0007669"/>
    <property type="project" value="UniProtKB-KW"/>
</dbReference>
<dbReference type="GO" id="GO:0006397">
    <property type="term" value="P:mRNA processing"/>
    <property type="evidence" value="ECO:0007669"/>
    <property type="project" value="UniProtKB-KW"/>
</dbReference>
<dbReference type="GO" id="GO:0008380">
    <property type="term" value="P:RNA splicing"/>
    <property type="evidence" value="ECO:0007669"/>
    <property type="project" value="UniProtKB-UniRule"/>
</dbReference>
<dbReference type="GO" id="GO:0008033">
    <property type="term" value="P:tRNA processing"/>
    <property type="evidence" value="ECO:0007669"/>
    <property type="project" value="UniProtKB-KW"/>
</dbReference>
<dbReference type="HAMAP" id="MF_01390">
    <property type="entry name" value="MatK"/>
    <property type="match status" value="1"/>
</dbReference>
<dbReference type="InterPro" id="IPR024937">
    <property type="entry name" value="Domain_X"/>
</dbReference>
<dbReference type="InterPro" id="IPR002866">
    <property type="entry name" value="Maturase_MatK"/>
</dbReference>
<dbReference type="InterPro" id="IPR024942">
    <property type="entry name" value="Maturase_MatK_N"/>
</dbReference>
<dbReference type="PANTHER" id="PTHR34811">
    <property type="entry name" value="MATURASE K"/>
    <property type="match status" value="1"/>
</dbReference>
<dbReference type="PANTHER" id="PTHR34811:SF1">
    <property type="entry name" value="MATURASE K"/>
    <property type="match status" value="1"/>
</dbReference>
<dbReference type="Pfam" id="PF01348">
    <property type="entry name" value="Intron_maturas2"/>
    <property type="match status" value="1"/>
</dbReference>
<dbReference type="Pfam" id="PF01824">
    <property type="entry name" value="MatK_N"/>
    <property type="match status" value="1"/>
</dbReference>
<name>MATK_NICCL</name>
<geneLocation type="chloroplast"/>